<gene>
    <name evidence="1" type="primary">trpC</name>
    <name type="ordered locus">Atu1688</name>
    <name type="ORF">AGR_C_3101</name>
</gene>
<reference key="1">
    <citation type="journal article" date="2001" name="Science">
        <title>The genome of the natural genetic engineer Agrobacterium tumefaciens C58.</title>
        <authorList>
            <person name="Wood D.W."/>
            <person name="Setubal J.C."/>
            <person name="Kaul R."/>
            <person name="Monks D.E."/>
            <person name="Kitajima J.P."/>
            <person name="Okura V.K."/>
            <person name="Zhou Y."/>
            <person name="Chen L."/>
            <person name="Wood G.E."/>
            <person name="Almeida N.F. Jr."/>
            <person name="Woo L."/>
            <person name="Chen Y."/>
            <person name="Paulsen I.T."/>
            <person name="Eisen J.A."/>
            <person name="Karp P.D."/>
            <person name="Bovee D. Sr."/>
            <person name="Chapman P."/>
            <person name="Clendenning J."/>
            <person name="Deatherage G."/>
            <person name="Gillet W."/>
            <person name="Grant C."/>
            <person name="Kutyavin T."/>
            <person name="Levy R."/>
            <person name="Li M.-J."/>
            <person name="McClelland E."/>
            <person name="Palmieri A."/>
            <person name="Raymond C."/>
            <person name="Rouse G."/>
            <person name="Saenphimmachak C."/>
            <person name="Wu Z."/>
            <person name="Romero P."/>
            <person name="Gordon D."/>
            <person name="Zhang S."/>
            <person name="Yoo H."/>
            <person name="Tao Y."/>
            <person name="Biddle P."/>
            <person name="Jung M."/>
            <person name="Krespan W."/>
            <person name="Perry M."/>
            <person name="Gordon-Kamm B."/>
            <person name="Liao L."/>
            <person name="Kim S."/>
            <person name="Hendrick C."/>
            <person name="Zhao Z.-Y."/>
            <person name="Dolan M."/>
            <person name="Chumley F."/>
            <person name="Tingey S.V."/>
            <person name="Tomb J.-F."/>
            <person name="Gordon M.P."/>
            <person name="Olson M.V."/>
            <person name="Nester E.W."/>
        </authorList>
    </citation>
    <scope>NUCLEOTIDE SEQUENCE [LARGE SCALE GENOMIC DNA]</scope>
    <source>
        <strain>C58 / ATCC 33970</strain>
    </source>
</reference>
<reference key="2">
    <citation type="journal article" date="2001" name="Science">
        <title>Genome sequence of the plant pathogen and biotechnology agent Agrobacterium tumefaciens C58.</title>
        <authorList>
            <person name="Goodner B."/>
            <person name="Hinkle G."/>
            <person name="Gattung S."/>
            <person name="Miller N."/>
            <person name="Blanchard M."/>
            <person name="Qurollo B."/>
            <person name="Goldman B.S."/>
            <person name="Cao Y."/>
            <person name="Askenazi M."/>
            <person name="Halling C."/>
            <person name="Mullin L."/>
            <person name="Houmiel K."/>
            <person name="Gordon J."/>
            <person name="Vaudin M."/>
            <person name="Iartchouk O."/>
            <person name="Epp A."/>
            <person name="Liu F."/>
            <person name="Wollam C."/>
            <person name="Allinger M."/>
            <person name="Doughty D."/>
            <person name="Scott C."/>
            <person name="Lappas C."/>
            <person name="Markelz B."/>
            <person name="Flanagan C."/>
            <person name="Crowell C."/>
            <person name="Gurson J."/>
            <person name="Lomo C."/>
            <person name="Sear C."/>
            <person name="Strub G."/>
            <person name="Cielo C."/>
            <person name="Slater S."/>
        </authorList>
    </citation>
    <scope>NUCLEOTIDE SEQUENCE [LARGE SCALE GENOMIC DNA]</scope>
    <source>
        <strain>C58 / ATCC 33970</strain>
    </source>
</reference>
<protein>
    <recommendedName>
        <fullName evidence="1">Indole-3-glycerol phosphate synthase</fullName>
        <shortName evidence="1">IGPS</shortName>
        <ecNumber evidence="1">4.1.1.48</ecNumber>
    </recommendedName>
</protein>
<organism>
    <name type="scientific">Agrobacterium fabrum (strain C58 / ATCC 33970)</name>
    <name type="common">Agrobacterium tumefaciens (strain C58)</name>
    <dbReference type="NCBI Taxonomy" id="176299"/>
    <lineage>
        <taxon>Bacteria</taxon>
        <taxon>Pseudomonadati</taxon>
        <taxon>Pseudomonadota</taxon>
        <taxon>Alphaproteobacteria</taxon>
        <taxon>Hyphomicrobiales</taxon>
        <taxon>Rhizobiaceae</taxon>
        <taxon>Rhizobium/Agrobacterium group</taxon>
        <taxon>Agrobacterium</taxon>
        <taxon>Agrobacterium tumefaciens complex</taxon>
    </lineage>
</organism>
<name>TRPC_AGRFC</name>
<dbReference type="EC" id="4.1.1.48" evidence="1"/>
<dbReference type="EMBL" id="AE007869">
    <property type="protein sequence ID" value="AAK87459.2"/>
    <property type="molecule type" value="Genomic_DNA"/>
</dbReference>
<dbReference type="RefSeq" id="NP_354674.2">
    <property type="nucleotide sequence ID" value="NC_003062.2"/>
</dbReference>
<dbReference type="RefSeq" id="WP_006314425.1">
    <property type="nucleotide sequence ID" value="NC_003062.2"/>
</dbReference>
<dbReference type="SMR" id="Q7CYR2"/>
<dbReference type="STRING" id="176299.Atu1688"/>
<dbReference type="EnsemblBacteria" id="AAK87459">
    <property type="protein sequence ID" value="AAK87459"/>
    <property type="gene ID" value="Atu1688"/>
</dbReference>
<dbReference type="GeneID" id="1133726"/>
<dbReference type="KEGG" id="atu:Atu1688"/>
<dbReference type="PATRIC" id="fig|176299.10.peg.1702"/>
<dbReference type="eggNOG" id="COG0134">
    <property type="taxonomic scope" value="Bacteria"/>
</dbReference>
<dbReference type="HOGENOM" id="CLU_034247_2_0_5"/>
<dbReference type="OrthoDB" id="9804217at2"/>
<dbReference type="PhylomeDB" id="Q7CYR2"/>
<dbReference type="BioCyc" id="AGRO:ATU1688-MONOMER"/>
<dbReference type="UniPathway" id="UPA00035">
    <property type="reaction ID" value="UER00043"/>
</dbReference>
<dbReference type="Proteomes" id="UP000000813">
    <property type="component" value="Chromosome circular"/>
</dbReference>
<dbReference type="GO" id="GO:0004425">
    <property type="term" value="F:indole-3-glycerol-phosphate synthase activity"/>
    <property type="evidence" value="ECO:0007669"/>
    <property type="project" value="UniProtKB-UniRule"/>
</dbReference>
<dbReference type="GO" id="GO:0004640">
    <property type="term" value="F:phosphoribosylanthranilate isomerase activity"/>
    <property type="evidence" value="ECO:0007669"/>
    <property type="project" value="TreeGrafter"/>
</dbReference>
<dbReference type="GO" id="GO:0000162">
    <property type="term" value="P:L-tryptophan biosynthetic process"/>
    <property type="evidence" value="ECO:0007669"/>
    <property type="project" value="UniProtKB-UniRule"/>
</dbReference>
<dbReference type="CDD" id="cd00331">
    <property type="entry name" value="IGPS"/>
    <property type="match status" value="1"/>
</dbReference>
<dbReference type="FunFam" id="3.20.20.70:FF:000024">
    <property type="entry name" value="Indole-3-glycerol phosphate synthase"/>
    <property type="match status" value="1"/>
</dbReference>
<dbReference type="Gene3D" id="3.20.20.70">
    <property type="entry name" value="Aldolase class I"/>
    <property type="match status" value="1"/>
</dbReference>
<dbReference type="HAMAP" id="MF_00134_B">
    <property type="entry name" value="IGPS_B"/>
    <property type="match status" value="1"/>
</dbReference>
<dbReference type="InterPro" id="IPR013785">
    <property type="entry name" value="Aldolase_TIM"/>
</dbReference>
<dbReference type="InterPro" id="IPR045186">
    <property type="entry name" value="Indole-3-glycerol_P_synth"/>
</dbReference>
<dbReference type="InterPro" id="IPR013798">
    <property type="entry name" value="Indole-3-glycerol_P_synth_dom"/>
</dbReference>
<dbReference type="InterPro" id="IPR001468">
    <property type="entry name" value="Indole-3-GlycerolPSynthase_CS"/>
</dbReference>
<dbReference type="InterPro" id="IPR011060">
    <property type="entry name" value="RibuloseP-bd_barrel"/>
</dbReference>
<dbReference type="NCBIfam" id="NF001370">
    <property type="entry name" value="PRK00278.1-2"/>
    <property type="match status" value="1"/>
</dbReference>
<dbReference type="NCBIfam" id="NF001373">
    <property type="entry name" value="PRK00278.1-6"/>
    <property type="match status" value="1"/>
</dbReference>
<dbReference type="NCBIfam" id="NF001377">
    <property type="entry name" value="PRK00278.2-4"/>
    <property type="match status" value="1"/>
</dbReference>
<dbReference type="PANTHER" id="PTHR22854:SF2">
    <property type="entry name" value="INDOLE-3-GLYCEROL-PHOSPHATE SYNTHASE"/>
    <property type="match status" value="1"/>
</dbReference>
<dbReference type="PANTHER" id="PTHR22854">
    <property type="entry name" value="TRYPTOPHAN BIOSYNTHESIS PROTEIN"/>
    <property type="match status" value="1"/>
</dbReference>
<dbReference type="Pfam" id="PF00218">
    <property type="entry name" value="IGPS"/>
    <property type="match status" value="1"/>
</dbReference>
<dbReference type="SUPFAM" id="SSF51366">
    <property type="entry name" value="Ribulose-phoshate binding barrel"/>
    <property type="match status" value="1"/>
</dbReference>
<dbReference type="PROSITE" id="PS00614">
    <property type="entry name" value="IGPS"/>
    <property type="match status" value="1"/>
</dbReference>
<sequence length="271" mass="29038">MSDILKKIETYKLEEIAAAKAKVSLADLKAMAADQSAPRGFYKALRAKQAAGKFGLIAEIKKASPSKGLIRPDFDPPALAAAYEAGGAACLSVLTDTPSFQGAPEFLTAARNACALPALRKDFMFDTYQVHEARAWGADCILLIMASLSDDEAKRLEDEAFALGMDVLIEVHDAEETERALKLTSPLLGINNRNLRTFEVGLETSEKLAGLVPADKLLVGESGIFTFEDCQRLEKSGISTFLVGESLMRKDDVTAATKALLTGHSGILAAE</sequence>
<proteinExistence type="inferred from homology"/>
<comment type="catalytic activity">
    <reaction evidence="1">
        <text>1-(2-carboxyphenylamino)-1-deoxy-D-ribulose 5-phosphate + H(+) = (1S,2R)-1-C-(indol-3-yl)glycerol 3-phosphate + CO2 + H2O</text>
        <dbReference type="Rhea" id="RHEA:23476"/>
        <dbReference type="ChEBI" id="CHEBI:15377"/>
        <dbReference type="ChEBI" id="CHEBI:15378"/>
        <dbReference type="ChEBI" id="CHEBI:16526"/>
        <dbReference type="ChEBI" id="CHEBI:58613"/>
        <dbReference type="ChEBI" id="CHEBI:58866"/>
        <dbReference type="EC" id="4.1.1.48"/>
    </reaction>
</comment>
<comment type="pathway">
    <text evidence="1">Amino-acid biosynthesis; L-tryptophan biosynthesis; L-tryptophan from chorismate: step 4/5.</text>
</comment>
<comment type="similarity">
    <text evidence="1">Belongs to the TrpC family.</text>
</comment>
<evidence type="ECO:0000255" key="1">
    <source>
        <dbReference type="HAMAP-Rule" id="MF_00134"/>
    </source>
</evidence>
<accession>Q7CYR2</accession>
<feature type="chain" id="PRO_1000057868" description="Indole-3-glycerol phosphate synthase">
    <location>
        <begin position="1"/>
        <end position="271"/>
    </location>
</feature>
<keyword id="KW-0028">Amino-acid biosynthesis</keyword>
<keyword id="KW-0057">Aromatic amino acid biosynthesis</keyword>
<keyword id="KW-0210">Decarboxylase</keyword>
<keyword id="KW-0456">Lyase</keyword>
<keyword id="KW-1185">Reference proteome</keyword>
<keyword id="KW-0822">Tryptophan biosynthesis</keyword>